<sequence>MPGDKVTARRILKMKGSRPIVAVTAYDYPTAWIADEAGVDVILVGDSLGMVVLGYPSTLQVTLDDMVRHTAAVARAAKRPLIVADMPFGSYEPSSSAAVESAVALARVGAEAVKLEGGSEYADRVKAIVDAGIPVMGHLGLTPQRAMRIGGYRPRARGRDEARRLLLDAESLVEAGVFSIVLEFVSEEAAEMVTRRVPVPTICIGSGRRCDGQIIVFHDIVGLSRHTPPFAKKYVDARRIMVEAVTRYAEDVRNGRFPGEEHVVHAKEPLEDIS</sequence>
<name>PANB_AERPE</name>
<feature type="chain" id="PRO_0000184915" description="3-methyl-2-oxobutanoate hydroxymethyltransferase">
    <location>
        <begin position="1"/>
        <end position="274"/>
    </location>
</feature>
<feature type="active site" description="Proton acceptor" evidence="1">
    <location>
        <position position="183"/>
    </location>
</feature>
<feature type="binding site" evidence="1">
    <location>
        <begin position="46"/>
        <end position="47"/>
    </location>
    <ligand>
        <name>3-methyl-2-oxobutanoate</name>
        <dbReference type="ChEBI" id="CHEBI:11851"/>
    </ligand>
</feature>
<feature type="binding site" evidence="1">
    <location>
        <position position="46"/>
    </location>
    <ligand>
        <name>Mg(2+)</name>
        <dbReference type="ChEBI" id="CHEBI:18420"/>
    </ligand>
</feature>
<feature type="binding site" evidence="1">
    <location>
        <position position="85"/>
    </location>
    <ligand>
        <name>3-methyl-2-oxobutanoate</name>
        <dbReference type="ChEBI" id="CHEBI:11851"/>
    </ligand>
</feature>
<feature type="binding site" evidence="1">
    <location>
        <position position="85"/>
    </location>
    <ligand>
        <name>Mg(2+)</name>
        <dbReference type="ChEBI" id="CHEBI:18420"/>
    </ligand>
</feature>
<feature type="binding site" evidence="1">
    <location>
        <position position="114"/>
    </location>
    <ligand>
        <name>3-methyl-2-oxobutanoate</name>
        <dbReference type="ChEBI" id="CHEBI:11851"/>
    </ligand>
</feature>
<feature type="binding site" evidence="1">
    <location>
        <position position="116"/>
    </location>
    <ligand>
        <name>Mg(2+)</name>
        <dbReference type="ChEBI" id="CHEBI:18420"/>
    </ligand>
</feature>
<reference key="1">
    <citation type="journal article" date="1999" name="DNA Res.">
        <title>Complete genome sequence of an aerobic hyper-thermophilic crenarchaeon, Aeropyrum pernix K1.</title>
        <authorList>
            <person name="Kawarabayasi Y."/>
            <person name="Hino Y."/>
            <person name="Horikawa H."/>
            <person name="Yamazaki S."/>
            <person name="Haikawa Y."/>
            <person name="Jin-no K."/>
            <person name="Takahashi M."/>
            <person name="Sekine M."/>
            <person name="Baba S."/>
            <person name="Ankai A."/>
            <person name="Kosugi H."/>
            <person name="Hosoyama A."/>
            <person name="Fukui S."/>
            <person name="Nagai Y."/>
            <person name="Nishijima K."/>
            <person name="Nakazawa H."/>
            <person name="Takamiya M."/>
            <person name="Masuda S."/>
            <person name="Funahashi T."/>
            <person name="Tanaka T."/>
            <person name="Kudoh Y."/>
            <person name="Yamazaki J."/>
            <person name="Kushida N."/>
            <person name="Oguchi A."/>
            <person name="Aoki K."/>
            <person name="Kubota K."/>
            <person name="Nakamura Y."/>
            <person name="Nomura N."/>
            <person name="Sako Y."/>
            <person name="Kikuchi H."/>
        </authorList>
    </citation>
    <scope>NUCLEOTIDE SEQUENCE [LARGE SCALE GENOMIC DNA]</scope>
    <source>
        <strain>ATCC 700893 / DSM 11879 / JCM 9820 / NBRC 100138 / K1</strain>
    </source>
</reference>
<accession>Q9YE97</accession>
<keyword id="KW-0173">Coenzyme A biosynthesis</keyword>
<keyword id="KW-0963">Cytoplasm</keyword>
<keyword id="KW-0460">Magnesium</keyword>
<keyword id="KW-0479">Metal-binding</keyword>
<keyword id="KW-1185">Reference proteome</keyword>
<keyword id="KW-0808">Transferase</keyword>
<organism>
    <name type="scientific">Aeropyrum pernix (strain ATCC 700893 / DSM 11879 / JCM 9820 / NBRC 100138 / K1)</name>
    <dbReference type="NCBI Taxonomy" id="272557"/>
    <lineage>
        <taxon>Archaea</taxon>
        <taxon>Thermoproteota</taxon>
        <taxon>Thermoprotei</taxon>
        <taxon>Desulfurococcales</taxon>
        <taxon>Desulfurococcaceae</taxon>
        <taxon>Aeropyrum</taxon>
    </lineage>
</organism>
<gene>
    <name evidence="1" type="primary">panB</name>
    <name type="ordered locus">APE_0676</name>
</gene>
<dbReference type="EC" id="2.1.2.11" evidence="1"/>
<dbReference type="EMBL" id="BA000002">
    <property type="protein sequence ID" value="BAA79649.1"/>
    <property type="molecule type" value="Genomic_DNA"/>
</dbReference>
<dbReference type="PIR" id="A72656">
    <property type="entry name" value="A72656"/>
</dbReference>
<dbReference type="RefSeq" id="WP_010865897.1">
    <property type="nucleotide sequence ID" value="NC_000854.2"/>
</dbReference>
<dbReference type="SMR" id="Q9YE97"/>
<dbReference type="STRING" id="272557.APE_0676"/>
<dbReference type="EnsemblBacteria" id="BAA79649">
    <property type="protein sequence ID" value="BAA79649"/>
    <property type="gene ID" value="APE_0676"/>
</dbReference>
<dbReference type="GeneID" id="1444810"/>
<dbReference type="KEGG" id="ape:APE_0676"/>
<dbReference type="PATRIC" id="fig|272557.25.peg.486"/>
<dbReference type="eggNOG" id="arCOG00584">
    <property type="taxonomic scope" value="Archaea"/>
</dbReference>
<dbReference type="UniPathway" id="UPA00241"/>
<dbReference type="Proteomes" id="UP000002518">
    <property type="component" value="Chromosome"/>
</dbReference>
<dbReference type="GO" id="GO:0005737">
    <property type="term" value="C:cytoplasm"/>
    <property type="evidence" value="ECO:0007669"/>
    <property type="project" value="UniProtKB-SubCell"/>
</dbReference>
<dbReference type="GO" id="GO:0003864">
    <property type="term" value="F:3-methyl-2-oxobutanoate hydroxymethyltransferase activity"/>
    <property type="evidence" value="ECO:0007669"/>
    <property type="project" value="UniProtKB-UniRule"/>
</dbReference>
<dbReference type="GO" id="GO:0000287">
    <property type="term" value="F:magnesium ion binding"/>
    <property type="evidence" value="ECO:0007669"/>
    <property type="project" value="TreeGrafter"/>
</dbReference>
<dbReference type="GO" id="GO:0015937">
    <property type="term" value="P:coenzyme A biosynthetic process"/>
    <property type="evidence" value="ECO:0007669"/>
    <property type="project" value="UniProtKB-UniRule"/>
</dbReference>
<dbReference type="GO" id="GO:0015940">
    <property type="term" value="P:pantothenate biosynthetic process"/>
    <property type="evidence" value="ECO:0007669"/>
    <property type="project" value="InterPro"/>
</dbReference>
<dbReference type="CDD" id="cd06557">
    <property type="entry name" value="KPHMT-like"/>
    <property type="match status" value="1"/>
</dbReference>
<dbReference type="FunFam" id="3.20.20.60:FF:000003">
    <property type="entry name" value="3-methyl-2-oxobutanoate hydroxymethyltransferase"/>
    <property type="match status" value="1"/>
</dbReference>
<dbReference type="Gene3D" id="3.20.20.60">
    <property type="entry name" value="Phosphoenolpyruvate-binding domains"/>
    <property type="match status" value="1"/>
</dbReference>
<dbReference type="HAMAP" id="MF_00156">
    <property type="entry name" value="PanB"/>
    <property type="match status" value="1"/>
</dbReference>
<dbReference type="InterPro" id="IPR003700">
    <property type="entry name" value="Pantoate_hydroxy_MeTrfase"/>
</dbReference>
<dbReference type="InterPro" id="IPR015813">
    <property type="entry name" value="Pyrv/PenolPyrv_kinase-like_dom"/>
</dbReference>
<dbReference type="InterPro" id="IPR040442">
    <property type="entry name" value="Pyrv_kinase-like_dom_sf"/>
</dbReference>
<dbReference type="NCBIfam" id="TIGR00222">
    <property type="entry name" value="panB"/>
    <property type="match status" value="1"/>
</dbReference>
<dbReference type="NCBIfam" id="NF001452">
    <property type="entry name" value="PRK00311.1"/>
    <property type="match status" value="1"/>
</dbReference>
<dbReference type="PANTHER" id="PTHR20881">
    <property type="entry name" value="3-METHYL-2-OXOBUTANOATE HYDROXYMETHYLTRANSFERASE"/>
    <property type="match status" value="1"/>
</dbReference>
<dbReference type="PANTHER" id="PTHR20881:SF0">
    <property type="entry name" value="3-METHYL-2-OXOBUTANOATE HYDROXYMETHYLTRANSFERASE"/>
    <property type="match status" value="1"/>
</dbReference>
<dbReference type="Pfam" id="PF02548">
    <property type="entry name" value="Pantoate_transf"/>
    <property type="match status" value="1"/>
</dbReference>
<dbReference type="PIRSF" id="PIRSF000388">
    <property type="entry name" value="Pantoate_hydroxy_MeTrfase"/>
    <property type="match status" value="1"/>
</dbReference>
<dbReference type="SUPFAM" id="SSF51621">
    <property type="entry name" value="Phosphoenolpyruvate/pyruvate domain"/>
    <property type="match status" value="1"/>
</dbReference>
<comment type="function">
    <text evidence="1">Catalyzes the reversible reaction in which hydroxymethyl group from 5,10-methylenetetrahydrofolate is transferred onto alpha-ketoisovalerate to form ketopantoate.</text>
</comment>
<comment type="catalytic activity">
    <reaction evidence="1">
        <text>3-methyl-2-oxobutanoate + (6R)-5,10-methylene-5,6,7,8-tetrahydrofolate + H2O = 2-dehydropantoate + (6S)-5,6,7,8-tetrahydrofolate</text>
        <dbReference type="Rhea" id="RHEA:11824"/>
        <dbReference type="ChEBI" id="CHEBI:11561"/>
        <dbReference type="ChEBI" id="CHEBI:11851"/>
        <dbReference type="ChEBI" id="CHEBI:15377"/>
        <dbReference type="ChEBI" id="CHEBI:15636"/>
        <dbReference type="ChEBI" id="CHEBI:57453"/>
        <dbReference type="EC" id="2.1.2.11"/>
    </reaction>
</comment>
<comment type="cofactor">
    <cofactor evidence="1">
        <name>Mg(2+)</name>
        <dbReference type="ChEBI" id="CHEBI:18420"/>
    </cofactor>
    <text evidence="1">Binds 1 Mg(2+) ion per subunit.</text>
</comment>
<comment type="pathway">
    <text evidence="1">Cofactor biosynthesis; coenzyme A biosynthesis.</text>
</comment>
<comment type="subunit">
    <text evidence="1">Homodecamer; pentamer of dimers.</text>
</comment>
<comment type="subcellular location">
    <subcellularLocation>
        <location evidence="1">Cytoplasm</location>
    </subcellularLocation>
</comment>
<comment type="similarity">
    <text evidence="1">Belongs to the PanB family.</text>
</comment>
<proteinExistence type="inferred from homology"/>
<protein>
    <recommendedName>
        <fullName evidence="1">3-methyl-2-oxobutanoate hydroxymethyltransferase</fullName>
        <ecNumber evidence="1">2.1.2.11</ecNumber>
    </recommendedName>
    <alternativeName>
        <fullName evidence="1">Ketopantoate hydroxymethyltransferase</fullName>
        <shortName evidence="1">KPHMT</shortName>
    </alternativeName>
</protein>
<evidence type="ECO:0000255" key="1">
    <source>
        <dbReference type="HAMAP-Rule" id="MF_00156"/>
    </source>
</evidence>